<name>Y784_TREPA</name>
<dbReference type="EMBL" id="AE000520">
    <property type="protein sequence ID" value="AAC65754.1"/>
    <property type="molecule type" value="Genomic_DNA"/>
</dbReference>
<dbReference type="PIR" id="A71283">
    <property type="entry name" value="A71283"/>
</dbReference>
<dbReference type="RefSeq" id="WP_010882229.1">
    <property type="nucleotide sequence ID" value="NC_021490.2"/>
</dbReference>
<dbReference type="SMR" id="O83763"/>
<dbReference type="IntAct" id="O83763">
    <property type="interactions" value="1"/>
</dbReference>
<dbReference type="STRING" id="243276.TP_0784"/>
<dbReference type="EnsemblBacteria" id="AAC65754">
    <property type="protein sequence ID" value="AAC65754"/>
    <property type="gene ID" value="TP_0784"/>
</dbReference>
<dbReference type="KEGG" id="tpa:TP_0784"/>
<dbReference type="KEGG" id="tpw:TPANIC_0784"/>
<dbReference type="HOGENOM" id="CLU_114980_0_0_12"/>
<dbReference type="Proteomes" id="UP000000811">
    <property type="component" value="Chromosome"/>
</dbReference>
<protein>
    <recommendedName>
        <fullName>Uncharacterized protein TP_0784</fullName>
    </recommendedName>
</protein>
<proteinExistence type="predicted"/>
<gene>
    <name type="ordered locus">TP_0784</name>
</gene>
<accession>O83763</accession>
<sequence length="199" mass="22512">MRIRLLFAPVSCLLLVCCADSSALRWIQQPSATRNTPTIAFFQVTFDRYNTHLLETRLHAQTLEFYHHDQTWTARDIHFTRYDGNGRASVRGHAGVLLTDCEGTVFYLGKKVDCFFPHEGLRLEGRAFRWENTRALFTSDHFSPVRISDASGAVVTGVGLCVNARTKRFVFQNGVHIDVDLDSFAKTRASRYAAPNLSP</sequence>
<reference key="1">
    <citation type="journal article" date="1998" name="Science">
        <title>Complete genome sequence of Treponema pallidum, the syphilis spirochete.</title>
        <authorList>
            <person name="Fraser C.M."/>
            <person name="Norris S.J."/>
            <person name="Weinstock G.M."/>
            <person name="White O."/>
            <person name="Sutton G.G."/>
            <person name="Dodson R.J."/>
            <person name="Gwinn M.L."/>
            <person name="Hickey E.K."/>
            <person name="Clayton R.A."/>
            <person name="Ketchum K.A."/>
            <person name="Sodergren E."/>
            <person name="Hardham J.M."/>
            <person name="McLeod M.P."/>
            <person name="Salzberg S.L."/>
            <person name="Peterson J.D."/>
            <person name="Khalak H.G."/>
            <person name="Richardson D.L."/>
            <person name="Howell J.K."/>
            <person name="Chidambaram M."/>
            <person name="Utterback T.R."/>
            <person name="McDonald L.A."/>
            <person name="Artiach P."/>
            <person name="Bowman C."/>
            <person name="Cotton M.D."/>
            <person name="Fujii C."/>
            <person name="Garland S.A."/>
            <person name="Hatch B."/>
            <person name="Horst K."/>
            <person name="Roberts K.M."/>
            <person name="Sandusky M."/>
            <person name="Weidman J.F."/>
            <person name="Smith H.O."/>
            <person name="Venter J.C."/>
        </authorList>
    </citation>
    <scope>NUCLEOTIDE SEQUENCE [LARGE SCALE GENOMIC DNA]</scope>
    <source>
        <strain>Nichols</strain>
    </source>
</reference>
<organism>
    <name type="scientific">Treponema pallidum (strain Nichols)</name>
    <dbReference type="NCBI Taxonomy" id="243276"/>
    <lineage>
        <taxon>Bacteria</taxon>
        <taxon>Pseudomonadati</taxon>
        <taxon>Spirochaetota</taxon>
        <taxon>Spirochaetia</taxon>
        <taxon>Spirochaetales</taxon>
        <taxon>Treponemataceae</taxon>
        <taxon>Treponema</taxon>
    </lineage>
</organism>
<feature type="chain" id="PRO_0000202324" description="Uncharacterized protein TP_0784">
    <location>
        <begin position="1"/>
        <end position="199"/>
    </location>
</feature>
<keyword id="KW-1185">Reference proteome</keyword>